<gene>
    <name evidence="1" type="primary">pdxH</name>
    <name type="ordered locus">Ecok1_15290</name>
    <name type="ORF">APECO1_721</name>
</gene>
<proteinExistence type="inferred from homology"/>
<protein>
    <recommendedName>
        <fullName evidence="1">Pyridoxine/pyridoxamine 5'-phosphate oxidase</fullName>
        <ecNumber evidence="1">1.4.3.5</ecNumber>
    </recommendedName>
    <alternativeName>
        <fullName evidence="1">PNP/PMP oxidase</fullName>
        <shortName evidence="1">PNPOx</shortName>
    </alternativeName>
    <alternativeName>
        <fullName evidence="1">Pyridoxal 5'-phosphate synthase</fullName>
    </alternativeName>
</protein>
<organism>
    <name type="scientific">Escherichia coli O1:K1 / APEC</name>
    <dbReference type="NCBI Taxonomy" id="405955"/>
    <lineage>
        <taxon>Bacteria</taxon>
        <taxon>Pseudomonadati</taxon>
        <taxon>Pseudomonadota</taxon>
        <taxon>Gammaproteobacteria</taxon>
        <taxon>Enterobacterales</taxon>
        <taxon>Enterobacteriaceae</taxon>
        <taxon>Escherichia</taxon>
    </lineage>
</organism>
<feature type="chain" id="PRO_0000292292" description="Pyridoxine/pyridoxamine 5'-phosphate oxidase">
    <location>
        <begin position="1"/>
        <end position="218"/>
    </location>
</feature>
<feature type="binding site" evidence="1">
    <location>
        <begin position="14"/>
        <end position="17"/>
    </location>
    <ligand>
        <name>substrate</name>
    </ligand>
</feature>
<feature type="binding site" evidence="1">
    <location>
        <begin position="67"/>
        <end position="72"/>
    </location>
    <ligand>
        <name>FMN</name>
        <dbReference type="ChEBI" id="CHEBI:58210"/>
    </ligand>
</feature>
<feature type="binding site" evidence="1">
    <location>
        <position position="72"/>
    </location>
    <ligand>
        <name>substrate</name>
    </ligand>
</feature>
<feature type="binding site" evidence="1">
    <location>
        <begin position="82"/>
        <end position="83"/>
    </location>
    <ligand>
        <name>FMN</name>
        <dbReference type="ChEBI" id="CHEBI:58210"/>
    </ligand>
</feature>
<feature type="binding site" evidence="1">
    <location>
        <position position="88"/>
    </location>
    <ligand>
        <name>FMN</name>
        <dbReference type="ChEBI" id="CHEBI:58210"/>
    </ligand>
</feature>
<feature type="binding site" evidence="1">
    <location>
        <position position="89"/>
    </location>
    <ligand>
        <name>FMN</name>
        <dbReference type="ChEBI" id="CHEBI:58210"/>
    </ligand>
</feature>
<feature type="binding site" evidence="1">
    <location>
        <position position="111"/>
    </location>
    <ligand>
        <name>FMN</name>
        <dbReference type="ChEBI" id="CHEBI:58210"/>
    </ligand>
</feature>
<feature type="binding site" evidence="1">
    <location>
        <position position="129"/>
    </location>
    <ligand>
        <name>substrate</name>
    </ligand>
</feature>
<feature type="binding site" evidence="1">
    <location>
        <position position="133"/>
    </location>
    <ligand>
        <name>substrate</name>
    </ligand>
</feature>
<feature type="binding site" evidence="1">
    <location>
        <position position="137"/>
    </location>
    <ligand>
        <name>substrate</name>
    </ligand>
</feature>
<feature type="binding site" evidence="1">
    <location>
        <begin position="146"/>
        <end position="147"/>
    </location>
    <ligand>
        <name>FMN</name>
        <dbReference type="ChEBI" id="CHEBI:58210"/>
    </ligand>
</feature>
<feature type="binding site" evidence="1">
    <location>
        <position position="191"/>
    </location>
    <ligand>
        <name>FMN</name>
        <dbReference type="ChEBI" id="CHEBI:58210"/>
    </ligand>
</feature>
<feature type="binding site" evidence="1">
    <location>
        <begin position="197"/>
        <end position="199"/>
    </location>
    <ligand>
        <name>substrate</name>
    </ligand>
</feature>
<feature type="binding site" evidence="1">
    <location>
        <position position="201"/>
    </location>
    <ligand>
        <name>FMN</name>
        <dbReference type="ChEBI" id="CHEBI:58210"/>
    </ligand>
</feature>
<dbReference type="EC" id="1.4.3.5" evidence="1"/>
<dbReference type="EMBL" id="CP000468">
    <property type="protein sequence ID" value="ABJ01023.1"/>
    <property type="molecule type" value="Genomic_DNA"/>
</dbReference>
<dbReference type="RefSeq" id="WP_001282316.1">
    <property type="nucleotide sequence ID" value="NZ_CADILS010000002.1"/>
</dbReference>
<dbReference type="SMR" id="A1ABI3"/>
<dbReference type="KEGG" id="ecv:APECO1_721"/>
<dbReference type="HOGENOM" id="CLU_032263_2_2_6"/>
<dbReference type="UniPathway" id="UPA01068">
    <property type="reaction ID" value="UER00304"/>
</dbReference>
<dbReference type="UniPathway" id="UPA01068">
    <property type="reaction ID" value="UER00305"/>
</dbReference>
<dbReference type="Proteomes" id="UP000008216">
    <property type="component" value="Chromosome"/>
</dbReference>
<dbReference type="GO" id="GO:0010181">
    <property type="term" value="F:FMN binding"/>
    <property type="evidence" value="ECO:0007669"/>
    <property type="project" value="UniProtKB-UniRule"/>
</dbReference>
<dbReference type="GO" id="GO:0004733">
    <property type="term" value="F:pyridoxamine phosphate oxidase activity"/>
    <property type="evidence" value="ECO:0007669"/>
    <property type="project" value="UniProtKB-UniRule"/>
</dbReference>
<dbReference type="GO" id="GO:0008615">
    <property type="term" value="P:pyridoxine biosynthetic process"/>
    <property type="evidence" value="ECO:0007669"/>
    <property type="project" value="UniProtKB-KW"/>
</dbReference>
<dbReference type="FunFam" id="2.30.110.10:FF:000001">
    <property type="entry name" value="Pyridoxine/pyridoxamine 5'-phosphate oxidase"/>
    <property type="match status" value="1"/>
</dbReference>
<dbReference type="Gene3D" id="2.30.110.10">
    <property type="entry name" value="Electron Transport, Fmn-binding Protein, Chain A"/>
    <property type="match status" value="1"/>
</dbReference>
<dbReference type="HAMAP" id="MF_01629">
    <property type="entry name" value="PdxH"/>
    <property type="match status" value="1"/>
</dbReference>
<dbReference type="InterPro" id="IPR000659">
    <property type="entry name" value="Pyridox_Oxase"/>
</dbReference>
<dbReference type="InterPro" id="IPR019740">
    <property type="entry name" value="Pyridox_Oxase_CS"/>
</dbReference>
<dbReference type="InterPro" id="IPR011576">
    <property type="entry name" value="Pyridox_Oxase_N"/>
</dbReference>
<dbReference type="InterPro" id="IPR019576">
    <property type="entry name" value="Pyridoxamine_oxidase_dimer_C"/>
</dbReference>
<dbReference type="InterPro" id="IPR012349">
    <property type="entry name" value="Split_barrel_FMN-bd"/>
</dbReference>
<dbReference type="NCBIfam" id="TIGR00558">
    <property type="entry name" value="pdxH"/>
    <property type="match status" value="1"/>
</dbReference>
<dbReference type="NCBIfam" id="NF004231">
    <property type="entry name" value="PRK05679.1"/>
    <property type="match status" value="1"/>
</dbReference>
<dbReference type="PANTHER" id="PTHR10851:SF0">
    <property type="entry name" value="PYRIDOXINE-5'-PHOSPHATE OXIDASE"/>
    <property type="match status" value="1"/>
</dbReference>
<dbReference type="PANTHER" id="PTHR10851">
    <property type="entry name" value="PYRIDOXINE-5-PHOSPHATE OXIDASE"/>
    <property type="match status" value="1"/>
</dbReference>
<dbReference type="Pfam" id="PF10590">
    <property type="entry name" value="PNP_phzG_C"/>
    <property type="match status" value="1"/>
</dbReference>
<dbReference type="Pfam" id="PF01243">
    <property type="entry name" value="PNPOx_N"/>
    <property type="match status" value="1"/>
</dbReference>
<dbReference type="PIRSF" id="PIRSF000190">
    <property type="entry name" value="Pyd_amn-ph_oxd"/>
    <property type="match status" value="1"/>
</dbReference>
<dbReference type="SUPFAM" id="SSF50475">
    <property type="entry name" value="FMN-binding split barrel"/>
    <property type="match status" value="1"/>
</dbReference>
<dbReference type="PROSITE" id="PS01064">
    <property type="entry name" value="PYRIDOX_OXIDASE"/>
    <property type="match status" value="1"/>
</dbReference>
<accession>A1ABI3</accession>
<keyword id="KW-0285">Flavoprotein</keyword>
<keyword id="KW-0288">FMN</keyword>
<keyword id="KW-0560">Oxidoreductase</keyword>
<keyword id="KW-0664">Pyridoxine biosynthesis</keyword>
<keyword id="KW-1185">Reference proteome</keyword>
<comment type="function">
    <text evidence="1">Catalyzes the oxidation of either pyridoxine 5'-phosphate (PNP) or pyridoxamine 5'-phosphate (PMP) into pyridoxal 5'-phosphate (PLP).</text>
</comment>
<comment type="catalytic activity">
    <reaction evidence="1">
        <text>pyridoxamine 5'-phosphate + O2 + H2O = pyridoxal 5'-phosphate + H2O2 + NH4(+)</text>
        <dbReference type="Rhea" id="RHEA:15817"/>
        <dbReference type="ChEBI" id="CHEBI:15377"/>
        <dbReference type="ChEBI" id="CHEBI:15379"/>
        <dbReference type="ChEBI" id="CHEBI:16240"/>
        <dbReference type="ChEBI" id="CHEBI:28938"/>
        <dbReference type="ChEBI" id="CHEBI:58451"/>
        <dbReference type="ChEBI" id="CHEBI:597326"/>
        <dbReference type="EC" id="1.4.3.5"/>
    </reaction>
</comment>
<comment type="catalytic activity">
    <reaction evidence="1">
        <text>pyridoxine 5'-phosphate + O2 = pyridoxal 5'-phosphate + H2O2</text>
        <dbReference type="Rhea" id="RHEA:15149"/>
        <dbReference type="ChEBI" id="CHEBI:15379"/>
        <dbReference type="ChEBI" id="CHEBI:16240"/>
        <dbReference type="ChEBI" id="CHEBI:58589"/>
        <dbReference type="ChEBI" id="CHEBI:597326"/>
        <dbReference type="EC" id="1.4.3.5"/>
    </reaction>
</comment>
<comment type="cofactor">
    <cofactor evidence="1">
        <name>FMN</name>
        <dbReference type="ChEBI" id="CHEBI:58210"/>
    </cofactor>
    <text evidence="1">Binds 1 FMN per subunit.</text>
</comment>
<comment type="pathway">
    <text evidence="1">Cofactor metabolism; pyridoxal 5'-phosphate salvage; pyridoxal 5'-phosphate from pyridoxamine 5'-phosphate: step 1/1.</text>
</comment>
<comment type="pathway">
    <text evidence="1">Cofactor metabolism; pyridoxal 5'-phosphate salvage; pyridoxal 5'-phosphate from pyridoxine 5'-phosphate: step 1/1.</text>
</comment>
<comment type="subunit">
    <text evidence="1">Homodimer.</text>
</comment>
<comment type="similarity">
    <text evidence="1">Belongs to the pyridoxamine 5'-phosphate oxidase family.</text>
</comment>
<name>PDXH_ECOK1</name>
<reference key="1">
    <citation type="journal article" date="2007" name="J. Bacteriol.">
        <title>The genome sequence of avian pathogenic Escherichia coli strain O1:K1:H7 shares strong similarities with human extraintestinal pathogenic E. coli genomes.</title>
        <authorList>
            <person name="Johnson T.J."/>
            <person name="Kariyawasam S."/>
            <person name="Wannemuehler Y."/>
            <person name="Mangiamele P."/>
            <person name="Johnson S.J."/>
            <person name="Doetkott C."/>
            <person name="Skyberg J.A."/>
            <person name="Lynne A.M."/>
            <person name="Johnson J.R."/>
            <person name="Nolan L.K."/>
        </authorList>
    </citation>
    <scope>NUCLEOTIDE SEQUENCE [LARGE SCALE GENOMIC DNA]</scope>
</reference>
<evidence type="ECO:0000255" key="1">
    <source>
        <dbReference type="HAMAP-Rule" id="MF_01629"/>
    </source>
</evidence>
<sequence length="218" mass="25603">MSDNDELQQIAHLRREYTKGGLRRRDLPADPLTLFERWLSQACEAKLADPTAMVVATVDEHDQPYQRIVLLKHYDEKGMVFYTNLGSRKAHQIENNPRVSLLFPWHTLERQVMVIGKAERLSTLEVMKYFHSRPRDSQIGAWVSKQSSRISARGILESKFLELKQKFQQGEVPLPSFWGGFRVSLEQIEFWQGGEHRLHDRFLYQRENDAWKIDRLAP</sequence>